<organism>
    <name type="scientific">Choristoneura fumiferana defective polyhedrosis virus</name>
    <name type="common">Cfdef</name>
    <dbReference type="NCBI Taxonomy" id="74660"/>
    <lineage>
        <taxon>Viruses</taxon>
        <taxon>Viruses incertae sedis</taxon>
        <taxon>Naldaviricetes</taxon>
        <taxon>Lefavirales</taxon>
        <taxon>Baculoviridae</taxon>
        <taxon>Alphabaculovirus</taxon>
        <taxon>Alphabaculovirus alterchofumiferanae</taxon>
    </lineage>
</organism>
<feature type="signal peptide" evidence="2">
    <location>
        <begin position="1"/>
        <end position="18"/>
    </location>
</feature>
<feature type="propeptide" id="PRO_0000322206" description="Activation peptide" evidence="2">
    <location>
        <begin position="19"/>
        <end position="113"/>
    </location>
</feature>
<feature type="chain" id="PRO_0000322207" description="Viral cathepsin">
    <location>
        <begin position="114"/>
        <end position="324"/>
    </location>
</feature>
<feature type="active site" evidence="1">
    <location>
        <position position="137"/>
    </location>
</feature>
<feature type="active site" evidence="1">
    <location>
        <position position="270"/>
    </location>
</feature>
<feature type="active site" evidence="1">
    <location>
        <position position="290"/>
    </location>
</feature>
<feature type="glycosylation site" description="N-linked (GlcNAc...) asparagine; by host" evidence="2">
    <location>
        <position position="159"/>
    </location>
</feature>
<feature type="disulfide bond" evidence="1">
    <location>
        <begin position="134"/>
        <end position="175"/>
    </location>
</feature>
<feature type="disulfide bond" evidence="1">
    <location>
        <begin position="168"/>
        <end position="208"/>
    </location>
</feature>
<feature type="disulfide bond" evidence="1">
    <location>
        <begin position="263"/>
        <end position="311"/>
    </location>
</feature>
<feature type="sequence conflict" description="In Ref. 2; AAB68595." evidence="6" ref="2">
    <original>L</original>
    <variation>A</variation>
    <location>
        <position position="210"/>
    </location>
</feature>
<feature type="sequence conflict" description="In Ref. 2; AAB68595." evidence="6" ref="2">
    <original>VLM</original>
    <variation>ITV</variation>
    <location>
        <begin position="226"/>
        <end position="228"/>
    </location>
</feature>
<feature type="sequence conflict" description="In Ref. 2; AAB68595." evidence="6" ref="2">
    <original>I</original>
    <variation>S</variation>
    <location>
        <position position="239"/>
    </location>
</feature>
<feature type="sequence conflict" description="In Ref. 2; AAB68595." evidence="6" ref="2">
    <original>L</original>
    <variation>I</variation>
    <location>
        <position position="243"/>
    </location>
</feature>
<feature type="sequence conflict" description="In Ref. 2; AAB68595." evidence="6" ref="2">
    <original>VIR</original>
    <variation>IMK</variation>
    <location>
        <begin position="259"/>
        <end position="261"/>
    </location>
</feature>
<feature type="sequence conflict" description="In Ref. 2; AAB68595." evidence="6" ref="2">
    <original>E</original>
    <variation>Q</variation>
    <location>
        <position position="280"/>
    </location>
</feature>
<feature type="sequence conflict" description="In Ref. 2; AAB68595." evidence="6" ref="2">
    <original>T</original>
    <variation>A</variation>
    <location>
        <position position="294"/>
    </location>
</feature>
<proteinExistence type="inferred from homology"/>
<name>CATV_NPVCD</name>
<dbReference type="EC" id="3.4.22.50"/>
<dbReference type="EMBL" id="AY327402">
    <property type="protein sequence ID" value="AAQ91676.1"/>
    <property type="molecule type" value="Genomic_DNA"/>
</dbReference>
<dbReference type="EMBL" id="U72030">
    <property type="protein sequence ID" value="AAB68595.1"/>
    <property type="molecule type" value="Genomic_DNA"/>
</dbReference>
<dbReference type="RefSeq" id="NP_932731.1">
    <property type="nucleotide sequence ID" value="NC_005137.2"/>
</dbReference>
<dbReference type="SMR" id="Q6VTL7"/>
<dbReference type="MEROPS" id="C01.083"/>
<dbReference type="GlyCosmos" id="Q6VTL7">
    <property type="glycosylation" value="1 site, No reported glycans"/>
</dbReference>
<dbReference type="KEGG" id="vg:2943774"/>
<dbReference type="OrthoDB" id="4752at10239"/>
<dbReference type="Proteomes" id="UP000202937">
    <property type="component" value="Genome"/>
</dbReference>
<dbReference type="GO" id="GO:0008234">
    <property type="term" value="F:cysteine-type peptidase activity"/>
    <property type="evidence" value="ECO:0007669"/>
    <property type="project" value="UniProtKB-KW"/>
</dbReference>
<dbReference type="GO" id="GO:0006508">
    <property type="term" value="P:proteolysis"/>
    <property type="evidence" value="ECO:0007669"/>
    <property type="project" value="UniProtKB-KW"/>
</dbReference>
<dbReference type="CDD" id="cd02248">
    <property type="entry name" value="Peptidase_C1A"/>
    <property type="match status" value="1"/>
</dbReference>
<dbReference type="FunFam" id="3.90.70.10:FF:000103">
    <property type="entry name" value="Hypothetical LOC496748"/>
    <property type="match status" value="1"/>
</dbReference>
<dbReference type="Gene3D" id="3.90.70.10">
    <property type="entry name" value="Cysteine proteinases"/>
    <property type="match status" value="1"/>
</dbReference>
<dbReference type="InterPro" id="IPR038765">
    <property type="entry name" value="Papain-like_cys_pep_sf"/>
</dbReference>
<dbReference type="InterPro" id="IPR025661">
    <property type="entry name" value="Pept_asp_AS"/>
</dbReference>
<dbReference type="InterPro" id="IPR000169">
    <property type="entry name" value="Pept_cys_AS"/>
</dbReference>
<dbReference type="InterPro" id="IPR025660">
    <property type="entry name" value="Pept_his_AS"/>
</dbReference>
<dbReference type="InterPro" id="IPR013128">
    <property type="entry name" value="Peptidase_C1A"/>
</dbReference>
<dbReference type="InterPro" id="IPR000668">
    <property type="entry name" value="Peptidase_C1A_C"/>
</dbReference>
<dbReference type="InterPro" id="IPR039417">
    <property type="entry name" value="Peptidase_C1A_papain-like"/>
</dbReference>
<dbReference type="InterPro" id="IPR013201">
    <property type="entry name" value="Prot_inhib_I29"/>
</dbReference>
<dbReference type="PANTHER" id="PTHR12411">
    <property type="entry name" value="CYSTEINE PROTEASE FAMILY C1-RELATED"/>
    <property type="match status" value="1"/>
</dbReference>
<dbReference type="Pfam" id="PF08246">
    <property type="entry name" value="Inhibitor_I29"/>
    <property type="match status" value="1"/>
</dbReference>
<dbReference type="Pfam" id="PF00112">
    <property type="entry name" value="Peptidase_C1"/>
    <property type="match status" value="1"/>
</dbReference>
<dbReference type="PRINTS" id="PR00705">
    <property type="entry name" value="PAPAIN"/>
</dbReference>
<dbReference type="SMART" id="SM00848">
    <property type="entry name" value="Inhibitor_I29"/>
    <property type="match status" value="1"/>
</dbReference>
<dbReference type="SMART" id="SM00645">
    <property type="entry name" value="Pept_C1"/>
    <property type="match status" value="1"/>
</dbReference>
<dbReference type="SUPFAM" id="SSF54001">
    <property type="entry name" value="Cysteine proteinases"/>
    <property type="match status" value="1"/>
</dbReference>
<dbReference type="PROSITE" id="PS00640">
    <property type="entry name" value="THIOL_PROTEASE_ASN"/>
    <property type="match status" value="1"/>
</dbReference>
<dbReference type="PROSITE" id="PS00139">
    <property type="entry name" value="THIOL_PROTEASE_CYS"/>
    <property type="match status" value="1"/>
</dbReference>
<dbReference type="PROSITE" id="PS00639">
    <property type="entry name" value="THIOL_PROTEASE_HIS"/>
    <property type="match status" value="1"/>
</dbReference>
<sequence>MNKIVLYLLIYVGTFSAAYDLLKAPSYFEDFLHNFNKNYSSKSEKLHRFKIFQHNLEEIINKNLNDTSAQYEINKFSDLSKDETISKYTGLSLPLQNQNFCEVVVLNRPPDKGPLEFDWRRLNKVTSVKNQGTCGACWAFATLGSLESQFAIKHDQLINLSEQQLIDCDFVDMGCDGGLLHTAYEAVMNMGGIQAENDYPYEANNGDCRLNAAKFVVKVKKCYRYVLMFEEKLKDLLRIVGPLPVAIDASDIVNYKRGVIRYCANHGLNHAVLLVGYAVENGVPFWILKNTWGTDWGEQGYFRVQQNINACGIQNELPSSAEIY</sequence>
<reference key="1">
    <citation type="journal article" date="2005" name="J. Gen. Virol.">
        <title>Gene organization and sequencing of the Choristoneura fumiferana defective nucleopolyhedrovirus genome.</title>
        <authorList>
            <person name="Lauzon H.A."/>
            <person name="Jamieson P.B."/>
            <person name="Krell P.J."/>
            <person name="Arif B.M."/>
        </authorList>
    </citation>
    <scope>NUCLEOTIDE SEQUENCE [GENOMIC DNA]</scope>
</reference>
<reference key="2">
    <citation type="submission" date="1996-09" db="EMBL/GenBank/DDBJ databases">
        <title>CfDEF, defective virus from Choristoneura fumiferana nucleopolyhedrovirus.</title>
        <authorList>
            <person name="Arif B."/>
            <person name="Peng H."/>
        </authorList>
    </citation>
    <scope>NUCLEOTIDE SEQUENCE [GENOMIC DNA]</scope>
</reference>
<evidence type="ECO:0000250" key="1"/>
<evidence type="ECO:0000255" key="2"/>
<evidence type="ECO:0000255" key="3">
    <source>
        <dbReference type="PROSITE-ProRule" id="PRU10088"/>
    </source>
</evidence>
<evidence type="ECO:0000255" key="4">
    <source>
        <dbReference type="PROSITE-ProRule" id="PRU10089"/>
    </source>
</evidence>
<evidence type="ECO:0000255" key="5">
    <source>
        <dbReference type="PROSITE-ProRule" id="PRU10090"/>
    </source>
</evidence>
<evidence type="ECO:0000305" key="6"/>
<protein>
    <recommendedName>
        <fullName>Viral cathepsin</fullName>
        <shortName>V-cath</shortName>
        <ecNumber>3.4.22.50</ecNumber>
    </recommendedName>
    <alternativeName>
        <fullName>Cysteine proteinase</fullName>
        <shortName>CP</shortName>
    </alternativeName>
</protein>
<organismHost>
    <name type="scientific">Lepidoptera</name>
    <name type="common">butterflies and moths</name>
    <dbReference type="NCBI Taxonomy" id="7088"/>
</organismHost>
<keyword id="KW-1015">Disulfide bond</keyword>
<keyword id="KW-0325">Glycoprotein</keyword>
<keyword id="KW-0378">Hydrolase</keyword>
<keyword id="KW-0645">Protease</keyword>
<keyword id="KW-1185">Reference proteome</keyword>
<keyword id="KW-0732">Signal</keyword>
<keyword id="KW-0788">Thiol protease</keyword>
<keyword id="KW-0865">Zymogen</keyword>
<comment type="function">
    <text evidence="1">Cysteine protease that plays an essential role in host liquefaction to facilitate horizontal transmission of the virus. May participate in the degradation of foreign protein expressed by the baculovirus system (By similarity).</text>
</comment>
<comment type="catalytic activity">
    <reaction>
        <text>Endopeptidase of broad specificity, hydrolyzing substrates of both cathepsin L and cathepsin B.</text>
        <dbReference type="EC" id="3.4.22.50"/>
    </reaction>
</comment>
<comment type="PTM">
    <text evidence="1">Synthesized as an inactive proenzyme and activated by proteolytic removal of the inhibitory propeptide.</text>
</comment>
<comment type="similarity">
    <text evidence="3 4 5">Belongs to the peptidase C1 family.</text>
</comment>
<gene>
    <name type="primary">Vcath</name>
    <name type="ORF">Ac127</name>
    <name type="ORF">Op125</name>
</gene>
<accession>Q6VTL7</accession>
<accession>Q6LCB9</accession>